<name>FTSZ_NEIMB</name>
<gene>
    <name evidence="1" type="primary">ftsZ</name>
    <name type="ordered locus">NMB0427</name>
</gene>
<protein>
    <recommendedName>
        <fullName evidence="1">Cell division protein FtsZ</fullName>
    </recommendedName>
</protein>
<proteinExistence type="inferred from homology"/>
<organism>
    <name type="scientific">Neisseria meningitidis serogroup B (strain ATCC BAA-335 / MC58)</name>
    <dbReference type="NCBI Taxonomy" id="122586"/>
    <lineage>
        <taxon>Bacteria</taxon>
        <taxon>Pseudomonadati</taxon>
        <taxon>Pseudomonadota</taxon>
        <taxon>Betaproteobacteria</taxon>
        <taxon>Neisseriales</taxon>
        <taxon>Neisseriaceae</taxon>
        <taxon>Neisseria</taxon>
    </lineage>
</organism>
<reference key="1">
    <citation type="submission" date="1995-12" db="EMBL/GenBank/DDBJ databases">
        <authorList>
            <person name="Ribot E.M."/>
            <person name="Quinn F.D."/>
            <person name="Stephens D.S."/>
            <person name="Raymond N."/>
        </authorList>
    </citation>
    <scope>NUCLEOTIDE SEQUENCE [GENOMIC DNA]</scope>
    <source>
        <strain>NMB / Serogroup B</strain>
    </source>
</reference>
<reference key="2">
    <citation type="journal article" date="2000" name="Science">
        <title>Complete genome sequence of Neisseria meningitidis serogroup B strain MC58.</title>
        <authorList>
            <person name="Tettelin H."/>
            <person name="Saunders N.J."/>
            <person name="Heidelberg J.F."/>
            <person name="Jeffries A.C."/>
            <person name="Nelson K.E."/>
            <person name="Eisen J.A."/>
            <person name="Ketchum K.A."/>
            <person name="Hood D.W."/>
            <person name="Peden J.F."/>
            <person name="Dodson R.J."/>
            <person name="Nelson W.C."/>
            <person name="Gwinn M.L."/>
            <person name="DeBoy R.T."/>
            <person name="Peterson J.D."/>
            <person name="Hickey E.K."/>
            <person name="Haft D.H."/>
            <person name="Salzberg S.L."/>
            <person name="White O."/>
            <person name="Fleischmann R.D."/>
            <person name="Dougherty B.A."/>
            <person name="Mason T.M."/>
            <person name="Ciecko A."/>
            <person name="Parksey D.S."/>
            <person name="Blair E."/>
            <person name="Cittone H."/>
            <person name="Clark E.B."/>
            <person name="Cotton M.D."/>
            <person name="Utterback T.R."/>
            <person name="Khouri H.M."/>
            <person name="Qin H."/>
            <person name="Vamathevan J.J."/>
            <person name="Gill J."/>
            <person name="Scarlato V."/>
            <person name="Masignani V."/>
            <person name="Pizza M."/>
            <person name="Grandi G."/>
            <person name="Sun L."/>
            <person name="Smith H.O."/>
            <person name="Fraser C.M."/>
            <person name="Moxon E.R."/>
            <person name="Rappuoli R."/>
            <person name="Venter J.C."/>
        </authorList>
    </citation>
    <scope>NUCLEOTIDE SEQUENCE [LARGE SCALE GENOMIC DNA]</scope>
    <source>
        <strain>ATCC BAA-335 / MC58</strain>
    </source>
</reference>
<evidence type="ECO:0000255" key="1">
    <source>
        <dbReference type="HAMAP-Rule" id="MF_00909"/>
    </source>
</evidence>
<evidence type="ECO:0000305" key="2"/>
<keyword id="KW-0131">Cell cycle</keyword>
<keyword id="KW-0132">Cell division</keyword>
<keyword id="KW-0963">Cytoplasm</keyword>
<keyword id="KW-0342">GTP-binding</keyword>
<keyword id="KW-0547">Nucleotide-binding</keyword>
<keyword id="KW-1185">Reference proteome</keyword>
<keyword id="KW-0717">Septation</keyword>
<sequence length="392" mass="41487">MEFVYDVAESAVSPAVIKVIGLGGGGCNAINNMVANNVRGVEFISANTDAQSLAKNHAAKRIQLGTNLTRGLGAGANPDIGRAAAQEDREAIEEAIRGANMLFITTGMGGGTGTGSAPVVAEIAKSLGILTVAVVTRPFAYEGKRVHVAQAGLEQLKEHVDSLIIIPNDKLMTALGEDVTMREAFRAADNVLRDAVAGISEVVTCPSEIINLDFADVKTVMSNRGIAMMGSGYAQGIDRARMATDQAISSPLLDDVTLDGARGVLVNITTAPGCLKMSELSEVMKIVNQSAHPDLECKFGAAEDETMSEDAIRITIIATGLKEKGAVDFVPAREVEAVAPSKQEQSHNVEGMIRTNRGIRTMNLTAADFDNQSVLDDFEIPAILRRQHNSDK</sequence>
<comment type="function">
    <text evidence="1">Essential cell division protein that forms a contractile ring structure (Z ring) at the future cell division site. The regulation of the ring assembly controls the timing and the location of cell division. One of the functions of the FtsZ ring is to recruit other cell division proteins to the septum to produce a new cell wall between the dividing cells. Binds GTP and shows GTPase activity.</text>
</comment>
<comment type="subunit">
    <text evidence="1">Homodimer. Polymerizes to form a dynamic ring structure in a strictly GTP-dependent manner. Interacts directly with several other division proteins.</text>
</comment>
<comment type="subcellular location">
    <subcellularLocation>
        <location evidence="1">Cytoplasm</location>
    </subcellularLocation>
    <text evidence="1">Assembles at midcell at the inner surface of the cytoplasmic membrane.</text>
</comment>
<comment type="similarity">
    <text evidence="1">Belongs to the FtsZ family.</text>
</comment>
<dbReference type="EMBL" id="U43329">
    <property type="protein sequence ID" value="AAB18147.1"/>
    <property type="molecule type" value="Genomic_DNA"/>
</dbReference>
<dbReference type="EMBL" id="AE002098">
    <property type="protein sequence ID" value="AAF40865.1"/>
    <property type="molecule type" value="Genomic_DNA"/>
</dbReference>
<dbReference type="PIR" id="E81199">
    <property type="entry name" value="E81199"/>
</dbReference>
<dbReference type="RefSeq" id="NP_273475.1">
    <property type="nucleotide sequence ID" value="NC_003112.2"/>
</dbReference>
<dbReference type="RefSeq" id="WP_002212501.1">
    <property type="nucleotide sequence ID" value="NC_003112.2"/>
</dbReference>
<dbReference type="SMR" id="P0A0S6"/>
<dbReference type="FunCoup" id="P0A0S6">
    <property type="interactions" value="481"/>
</dbReference>
<dbReference type="STRING" id="122586.NMB0427"/>
<dbReference type="PaxDb" id="122586-NMB0427"/>
<dbReference type="GeneID" id="93387524"/>
<dbReference type="KEGG" id="nme:NMB0427"/>
<dbReference type="PATRIC" id="fig|122586.8.peg.541"/>
<dbReference type="HOGENOM" id="CLU_024865_0_1_4"/>
<dbReference type="InParanoid" id="P0A0S6"/>
<dbReference type="OrthoDB" id="9813375at2"/>
<dbReference type="Proteomes" id="UP000000425">
    <property type="component" value="Chromosome"/>
</dbReference>
<dbReference type="GO" id="GO:0032153">
    <property type="term" value="C:cell division site"/>
    <property type="evidence" value="ECO:0000318"/>
    <property type="project" value="GO_Central"/>
</dbReference>
<dbReference type="GO" id="GO:0005737">
    <property type="term" value="C:cytoplasm"/>
    <property type="evidence" value="ECO:0000318"/>
    <property type="project" value="GO_Central"/>
</dbReference>
<dbReference type="GO" id="GO:0005525">
    <property type="term" value="F:GTP binding"/>
    <property type="evidence" value="ECO:0000318"/>
    <property type="project" value="GO_Central"/>
</dbReference>
<dbReference type="GO" id="GO:0003924">
    <property type="term" value="F:GTPase activity"/>
    <property type="evidence" value="ECO:0000318"/>
    <property type="project" value="GO_Central"/>
</dbReference>
<dbReference type="GO" id="GO:0051301">
    <property type="term" value="P:cell division"/>
    <property type="evidence" value="ECO:0000318"/>
    <property type="project" value="GO_Central"/>
</dbReference>
<dbReference type="GO" id="GO:0000917">
    <property type="term" value="P:division septum assembly"/>
    <property type="evidence" value="ECO:0007669"/>
    <property type="project" value="UniProtKB-KW"/>
</dbReference>
<dbReference type="GO" id="GO:0043093">
    <property type="term" value="P:FtsZ-dependent cytokinesis"/>
    <property type="evidence" value="ECO:0007669"/>
    <property type="project" value="UniProtKB-UniRule"/>
</dbReference>
<dbReference type="GO" id="GO:0051258">
    <property type="term" value="P:protein polymerization"/>
    <property type="evidence" value="ECO:0007669"/>
    <property type="project" value="UniProtKB-UniRule"/>
</dbReference>
<dbReference type="CDD" id="cd02201">
    <property type="entry name" value="FtsZ_type1"/>
    <property type="match status" value="1"/>
</dbReference>
<dbReference type="FunFam" id="3.40.50.1440:FF:000001">
    <property type="entry name" value="Cell division protein FtsZ"/>
    <property type="match status" value="1"/>
</dbReference>
<dbReference type="Gene3D" id="3.30.1330.20">
    <property type="entry name" value="Tubulin/FtsZ, C-terminal domain"/>
    <property type="match status" value="1"/>
</dbReference>
<dbReference type="Gene3D" id="3.40.50.1440">
    <property type="entry name" value="Tubulin/FtsZ, GTPase domain"/>
    <property type="match status" value="1"/>
</dbReference>
<dbReference type="HAMAP" id="MF_00909">
    <property type="entry name" value="FtsZ"/>
    <property type="match status" value="1"/>
</dbReference>
<dbReference type="InterPro" id="IPR000158">
    <property type="entry name" value="Cell_div_FtsZ"/>
</dbReference>
<dbReference type="InterPro" id="IPR020805">
    <property type="entry name" value="Cell_div_FtsZ_CS"/>
</dbReference>
<dbReference type="InterPro" id="IPR045061">
    <property type="entry name" value="FtsZ/CetZ"/>
</dbReference>
<dbReference type="InterPro" id="IPR024757">
    <property type="entry name" value="FtsZ_C"/>
</dbReference>
<dbReference type="InterPro" id="IPR008280">
    <property type="entry name" value="Tub_FtsZ_C"/>
</dbReference>
<dbReference type="InterPro" id="IPR037103">
    <property type="entry name" value="Tubulin/FtsZ-like_C"/>
</dbReference>
<dbReference type="InterPro" id="IPR018316">
    <property type="entry name" value="Tubulin/FtsZ_2-layer-sand-dom"/>
</dbReference>
<dbReference type="InterPro" id="IPR036525">
    <property type="entry name" value="Tubulin/FtsZ_GTPase_sf"/>
</dbReference>
<dbReference type="InterPro" id="IPR003008">
    <property type="entry name" value="Tubulin_FtsZ_GTPase"/>
</dbReference>
<dbReference type="NCBIfam" id="TIGR00065">
    <property type="entry name" value="ftsZ"/>
    <property type="match status" value="1"/>
</dbReference>
<dbReference type="PANTHER" id="PTHR30314">
    <property type="entry name" value="CELL DIVISION PROTEIN FTSZ-RELATED"/>
    <property type="match status" value="1"/>
</dbReference>
<dbReference type="PANTHER" id="PTHR30314:SF3">
    <property type="entry name" value="MITOCHONDRIAL DIVISION PROTEIN FSZA"/>
    <property type="match status" value="1"/>
</dbReference>
<dbReference type="Pfam" id="PF12327">
    <property type="entry name" value="FtsZ_C"/>
    <property type="match status" value="1"/>
</dbReference>
<dbReference type="Pfam" id="PF00091">
    <property type="entry name" value="Tubulin"/>
    <property type="match status" value="1"/>
</dbReference>
<dbReference type="PRINTS" id="PR00423">
    <property type="entry name" value="CELLDVISFTSZ"/>
</dbReference>
<dbReference type="SMART" id="SM00864">
    <property type="entry name" value="Tubulin"/>
    <property type="match status" value="1"/>
</dbReference>
<dbReference type="SMART" id="SM00865">
    <property type="entry name" value="Tubulin_C"/>
    <property type="match status" value="1"/>
</dbReference>
<dbReference type="SUPFAM" id="SSF55307">
    <property type="entry name" value="Tubulin C-terminal domain-like"/>
    <property type="match status" value="1"/>
</dbReference>
<dbReference type="SUPFAM" id="SSF52490">
    <property type="entry name" value="Tubulin nucleotide-binding domain-like"/>
    <property type="match status" value="1"/>
</dbReference>
<dbReference type="PROSITE" id="PS01134">
    <property type="entry name" value="FTSZ_1"/>
    <property type="match status" value="1"/>
</dbReference>
<dbReference type="PROSITE" id="PS01135">
    <property type="entry name" value="FTSZ_2"/>
    <property type="match status" value="1"/>
</dbReference>
<feature type="chain" id="PRO_0000114369" description="Cell division protein FtsZ">
    <location>
        <begin position="1"/>
        <end position="392"/>
    </location>
</feature>
<feature type="binding site" evidence="1">
    <location>
        <begin position="24"/>
        <end position="28"/>
    </location>
    <ligand>
        <name>GTP</name>
        <dbReference type="ChEBI" id="CHEBI:37565"/>
    </ligand>
</feature>
<feature type="binding site" evidence="1">
    <location>
        <begin position="111"/>
        <end position="113"/>
    </location>
    <ligand>
        <name>GTP</name>
        <dbReference type="ChEBI" id="CHEBI:37565"/>
    </ligand>
</feature>
<feature type="binding site" evidence="1">
    <location>
        <position position="142"/>
    </location>
    <ligand>
        <name>GTP</name>
        <dbReference type="ChEBI" id="CHEBI:37565"/>
    </ligand>
</feature>
<feature type="binding site" evidence="1">
    <location>
        <position position="145"/>
    </location>
    <ligand>
        <name>GTP</name>
        <dbReference type="ChEBI" id="CHEBI:37565"/>
    </ligand>
</feature>
<feature type="binding site" evidence="1">
    <location>
        <position position="189"/>
    </location>
    <ligand>
        <name>GTP</name>
        <dbReference type="ChEBI" id="CHEBI:37565"/>
    </ligand>
</feature>
<feature type="sequence conflict" description="In Ref. 1; AAB18147." evidence="2" ref="1">
    <original>I</original>
    <variation>S</variation>
    <location>
        <position position="30"/>
    </location>
</feature>
<feature type="sequence conflict" description="In Ref. 1; AAB18147." evidence="2" ref="1">
    <original>MIRTNRGIRTMNLTAADFDNQSVLDDFEIPAILRRQHNSDK</original>
    <variation>RSAPIAVSAR</variation>
    <location>
        <begin position="352"/>
        <end position="392"/>
    </location>
</feature>
<accession>P0A0S6</accession>
<accession>Q51130</accession>